<dbReference type="EC" id="3.4.22.1" evidence="2"/>
<dbReference type="EMBL" id="CR860464">
    <property type="protein sequence ID" value="CAH92586.1"/>
    <property type="molecule type" value="mRNA"/>
</dbReference>
<dbReference type="EMBL" id="CR860560">
    <property type="protein sequence ID" value="CAH92685.1"/>
    <property type="molecule type" value="mRNA"/>
</dbReference>
<dbReference type="RefSeq" id="NP_001126573.1">
    <property type="nucleotide sequence ID" value="NM_001133101.1"/>
</dbReference>
<dbReference type="RefSeq" id="XP_024106379.1">
    <property type="nucleotide sequence ID" value="XM_024250611.3"/>
</dbReference>
<dbReference type="RefSeq" id="XP_063582394.1">
    <property type="nucleotide sequence ID" value="XM_063726324.1"/>
</dbReference>
<dbReference type="RefSeq" id="XP_063582395.1">
    <property type="nucleotide sequence ID" value="XM_063726325.1"/>
</dbReference>
<dbReference type="RefSeq" id="XP_063582396.1">
    <property type="nucleotide sequence ID" value="XM_063726326.1"/>
</dbReference>
<dbReference type="SMR" id="Q5R6D1"/>
<dbReference type="FunCoup" id="Q5R6D1">
    <property type="interactions" value="1199"/>
</dbReference>
<dbReference type="STRING" id="9601.ENSPPYP00000020558"/>
<dbReference type="MEROPS" id="C01.060"/>
<dbReference type="GlyCosmos" id="Q5R6D1">
    <property type="glycosylation" value="1 site, No reported glycans"/>
</dbReference>
<dbReference type="Ensembl" id="ENSPPYT00000021385.3">
    <property type="protein sequence ID" value="ENSPPYP00000020558.2"/>
    <property type="gene ID" value="ENSPPYG00000018345.3"/>
</dbReference>
<dbReference type="GeneID" id="100173564"/>
<dbReference type="KEGG" id="pon:100173564"/>
<dbReference type="CTD" id="1508"/>
<dbReference type="eggNOG" id="KOG1543">
    <property type="taxonomic scope" value="Eukaryota"/>
</dbReference>
<dbReference type="GeneTree" id="ENSGT00940000158680"/>
<dbReference type="HOGENOM" id="CLU_012184_3_3_1"/>
<dbReference type="InParanoid" id="Q5R6D1"/>
<dbReference type="OMA" id="DEKIPYW"/>
<dbReference type="OrthoDB" id="640249at2759"/>
<dbReference type="TreeFam" id="TF314576"/>
<dbReference type="Proteomes" id="UP000001595">
    <property type="component" value="Chromosome 8"/>
</dbReference>
<dbReference type="GO" id="GO:0016324">
    <property type="term" value="C:apical plasma membrane"/>
    <property type="evidence" value="ECO:0007669"/>
    <property type="project" value="UniProtKB-SubCell"/>
</dbReference>
<dbReference type="GO" id="GO:0009897">
    <property type="term" value="C:external side of plasma membrane"/>
    <property type="evidence" value="ECO:0007669"/>
    <property type="project" value="Ensembl"/>
</dbReference>
<dbReference type="GO" id="GO:0005615">
    <property type="term" value="C:extracellular space"/>
    <property type="evidence" value="ECO:0007669"/>
    <property type="project" value="Ensembl"/>
</dbReference>
<dbReference type="GO" id="GO:0005764">
    <property type="term" value="C:lysosome"/>
    <property type="evidence" value="ECO:0007669"/>
    <property type="project" value="UniProtKB-SubCell"/>
</dbReference>
<dbReference type="GO" id="GO:0042470">
    <property type="term" value="C:melanosome"/>
    <property type="evidence" value="ECO:0007669"/>
    <property type="project" value="UniProtKB-SubCell"/>
</dbReference>
<dbReference type="GO" id="GO:1904090">
    <property type="term" value="C:peptidase inhibitor complex"/>
    <property type="evidence" value="ECO:0007669"/>
    <property type="project" value="Ensembl"/>
</dbReference>
<dbReference type="GO" id="GO:0048471">
    <property type="term" value="C:perinuclear region of cytoplasm"/>
    <property type="evidence" value="ECO:0007669"/>
    <property type="project" value="Ensembl"/>
</dbReference>
<dbReference type="GO" id="GO:0005518">
    <property type="term" value="F:collagen binding"/>
    <property type="evidence" value="ECO:0007669"/>
    <property type="project" value="Ensembl"/>
</dbReference>
<dbReference type="GO" id="GO:0004197">
    <property type="term" value="F:cysteine-type endopeptidase activity"/>
    <property type="evidence" value="ECO:0007669"/>
    <property type="project" value="UniProtKB-EC"/>
</dbReference>
<dbReference type="GO" id="GO:0004175">
    <property type="term" value="F:endopeptidase activity"/>
    <property type="evidence" value="ECO:0000250"/>
    <property type="project" value="UniProtKB"/>
</dbReference>
<dbReference type="GO" id="GO:0043394">
    <property type="term" value="F:proteoglycan binding"/>
    <property type="evidence" value="ECO:0007669"/>
    <property type="project" value="Ensembl"/>
</dbReference>
<dbReference type="GO" id="GO:0097067">
    <property type="term" value="P:cellular response to thyroid hormone stimulus"/>
    <property type="evidence" value="ECO:0007669"/>
    <property type="project" value="Ensembl"/>
</dbReference>
<dbReference type="GO" id="GO:0030574">
    <property type="term" value="P:collagen catabolic process"/>
    <property type="evidence" value="ECO:0007669"/>
    <property type="project" value="Ensembl"/>
</dbReference>
<dbReference type="GO" id="GO:0046697">
    <property type="term" value="P:decidualization"/>
    <property type="evidence" value="ECO:0007669"/>
    <property type="project" value="Ensembl"/>
</dbReference>
<dbReference type="GO" id="GO:0030855">
    <property type="term" value="P:epithelial cell differentiation"/>
    <property type="evidence" value="ECO:0007669"/>
    <property type="project" value="Ensembl"/>
</dbReference>
<dbReference type="GO" id="GO:0051603">
    <property type="term" value="P:proteolysis involved in protein catabolic process"/>
    <property type="evidence" value="ECO:0007669"/>
    <property type="project" value="Ensembl"/>
</dbReference>
<dbReference type="GO" id="GO:0046718">
    <property type="term" value="P:symbiont entry into host cell"/>
    <property type="evidence" value="ECO:0007669"/>
    <property type="project" value="Ensembl"/>
</dbReference>
<dbReference type="GO" id="GO:0006590">
    <property type="term" value="P:thyroid hormone generation"/>
    <property type="evidence" value="ECO:0007669"/>
    <property type="project" value="Ensembl"/>
</dbReference>
<dbReference type="CDD" id="cd02620">
    <property type="entry name" value="Peptidase_C1A_CathepsinB"/>
    <property type="match status" value="1"/>
</dbReference>
<dbReference type="FunFam" id="3.90.70.10:FF:000031">
    <property type="entry name" value="Cathepsin B"/>
    <property type="match status" value="1"/>
</dbReference>
<dbReference type="Gene3D" id="3.90.70.10">
    <property type="entry name" value="Cysteine proteinases"/>
    <property type="match status" value="1"/>
</dbReference>
<dbReference type="InterPro" id="IPR038765">
    <property type="entry name" value="Papain-like_cys_pep_sf"/>
</dbReference>
<dbReference type="InterPro" id="IPR025661">
    <property type="entry name" value="Pept_asp_AS"/>
</dbReference>
<dbReference type="InterPro" id="IPR000169">
    <property type="entry name" value="Pept_cys_AS"/>
</dbReference>
<dbReference type="InterPro" id="IPR025660">
    <property type="entry name" value="Pept_his_AS"/>
</dbReference>
<dbReference type="InterPro" id="IPR013128">
    <property type="entry name" value="Peptidase_C1A"/>
</dbReference>
<dbReference type="InterPro" id="IPR000668">
    <property type="entry name" value="Peptidase_C1A_C"/>
</dbReference>
<dbReference type="InterPro" id="IPR012599">
    <property type="entry name" value="Propeptide_C1A"/>
</dbReference>
<dbReference type="PANTHER" id="PTHR12411">
    <property type="entry name" value="CYSTEINE PROTEASE FAMILY C1-RELATED"/>
    <property type="match status" value="1"/>
</dbReference>
<dbReference type="Pfam" id="PF00112">
    <property type="entry name" value="Peptidase_C1"/>
    <property type="match status" value="1"/>
</dbReference>
<dbReference type="Pfam" id="PF08127">
    <property type="entry name" value="Propeptide_C1"/>
    <property type="match status" value="1"/>
</dbReference>
<dbReference type="PRINTS" id="PR00705">
    <property type="entry name" value="PAPAIN"/>
</dbReference>
<dbReference type="SMART" id="SM00645">
    <property type="entry name" value="Pept_C1"/>
    <property type="match status" value="1"/>
</dbReference>
<dbReference type="SUPFAM" id="SSF54001">
    <property type="entry name" value="Cysteine proteinases"/>
    <property type="match status" value="1"/>
</dbReference>
<dbReference type="PROSITE" id="PS00640">
    <property type="entry name" value="THIOL_PROTEASE_ASN"/>
    <property type="match status" value="1"/>
</dbReference>
<dbReference type="PROSITE" id="PS00139">
    <property type="entry name" value="THIOL_PROTEASE_CYS"/>
    <property type="match status" value="1"/>
</dbReference>
<dbReference type="PROSITE" id="PS00639">
    <property type="entry name" value="THIOL_PROTEASE_HIS"/>
    <property type="match status" value="1"/>
</dbReference>
<name>CATB_PONAB</name>
<keyword id="KW-0007">Acetylation</keyword>
<keyword id="KW-1003">Cell membrane</keyword>
<keyword id="KW-1015">Disulfide bond</keyword>
<keyword id="KW-0325">Glycoprotein</keyword>
<keyword id="KW-0378">Hydrolase</keyword>
<keyword id="KW-0458">Lysosome</keyword>
<keyword id="KW-0472">Membrane</keyword>
<keyword id="KW-0645">Protease</keyword>
<keyword id="KW-1185">Reference proteome</keyword>
<keyword id="KW-0964">Secreted</keyword>
<keyword id="KW-0732">Signal</keyword>
<keyword id="KW-0788">Thiol protease</keyword>
<keyword id="KW-0865">Zymogen</keyword>
<protein>
    <recommendedName>
        <fullName>Cathepsin B</fullName>
        <ecNumber evidence="2">3.4.22.1</ecNumber>
    </recommendedName>
    <component>
        <recommendedName>
            <fullName evidence="2">Cathepsin B light chain</fullName>
        </recommendedName>
    </component>
    <component>
        <recommendedName>
            <fullName evidence="2">Cathepsin B heavy chain</fullName>
        </recommendedName>
    </component>
</protein>
<gene>
    <name type="primary">CTSB</name>
</gene>
<accession>Q5R6D1</accession>
<proteinExistence type="evidence at transcript level"/>
<sequence>MWQLWASLCCLLALADARSRPSFHPLSDELVNYVNKRNTTWQAGHNFYNVDVSYLKKLCGTFLGGPKPPQRVMFTEDLKLPESFDAREQWPQCPTIKEIRDQGSCGSCWAFGAVEAISDRICIHTNAHVSVEVSAEDLLTCCGSMCGDGCNGGYPAEAWNFWTRKGLVSGGLYESHVGCRPYSIPPCEHHVNGSRPPCTGEGDTPKCSKICEPGYSPTYKQDKHYGYNSYSVSNSERDIMAEIYKNGPVEGAFSVYSDFLLYKSGVYQHVTGEMMGGHAIRILGWGVENGTPYWLVANSWNTDWGDNGFFKILRGQDHCGIESEVVAGIPRTDQYWEKI</sequence>
<evidence type="ECO:0000250" key="1">
    <source>
        <dbReference type="UniProtKB" id="P00787"/>
    </source>
</evidence>
<evidence type="ECO:0000250" key="2">
    <source>
        <dbReference type="UniProtKB" id="P07858"/>
    </source>
</evidence>
<evidence type="ECO:0000250" key="3">
    <source>
        <dbReference type="UniProtKB" id="P10605"/>
    </source>
</evidence>
<evidence type="ECO:0000255" key="4"/>
<evidence type="ECO:0000255" key="5">
    <source>
        <dbReference type="PROSITE-ProRule" id="PRU10088"/>
    </source>
</evidence>
<evidence type="ECO:0000255" key="6">
    <source>
        <dbReference type="PROSITE-ProRule" id="PRU10089"/>
    </source>
</evidence>
<evidence type="ECO:0000255" key="7">
    <source>
        <dbReference type="PROSITE-ProRule" id="PRU10090"/>
    </source>
</evidence>
<feature type="signal peptide" evidence="4">
    <location>
        <begin position="1"/>
        <end position="17"/>
    </location>
</feature>
<feature type="propeptide" id="PRO_0000330880" description="Activation peptide" evidence="2">
    <location>
        <begin position="18"/>
        <end position="79"/>
    </location>
</feature>
<feature type="chain" id="PRO_0000330881" description="Cathepsin B">
    <location>
        <begin position="80"/>
        <end position="333"/>
    </location>
</feature>
<feature type="chain" id="PRO_0000330882" description="Cathepsin B light chain" evidence="2">
    <location>
        <begin position="80"/>
        <end position="126"/>
    </location>
</feature>
<feature type="chain" id="PRO_0000330883" description="Cathepsin B heavy chain" evidence="2">
    <location>
        <begin position="129"/>
        <end position="333"/>
    </location>
</feature>
<feature type="propeptide" id="PRO_0000330884" evidence="2">
    <location>
        <begin position="334"/>
        <end position="339"/>
    </location>
</feature>
<feature type="active site" evidence="5">
    <location>
        <position position="108"/>
    </location>
</feature>
<feature type="active site" evidence="6">
    <location>
        <position position="278"/>
    </location>
</feature>
<feature type="active site" evidence="7">
    <location>
        <position position="298"/>
    </location>
</feature>
<feature type="modified residue" description="N6-acetyllysine" evidence="3">
    <location>
        <position position="220"/>
    </location>
</feature>
<feature type="glycosylation site" description="N-linked (GlcNAc...) asparagine" evidence="4">
    <location>
        <position position="192"/>
    </location>
</feature>
<feature type="disulfide bond" evidence="2">
    <location>
        <begin position="93"/>
        <end position="122"/>
    </location>
</feature>
<feature type="disulfide bond" evidence="2">
    <location>
        <begin position="105"/>
        <end position="150"/>
    </location>
</feature>
<feature type="disulfide bond" evidence="2">
    <location>
        <begin position="141"/>
        <end position="207"/>
    </location>
</feature>
<feature type="disulfide bond" evidence="2">
    <location>
        <begin position="142"/>
        <end position="146"/>
    </location>
</feature>
<feature type="disulfide bond" evidence="2">
    <location>
        <begin position="179"/>
        <end position="211"/>
    </location>
</feature>
<feature type="disulfide bond" evidence="2">
    <location>
        <begin position="187"/>
        <end position="198"/>
    </location>
</feature>
<organism>
    <name type="scientific">Pongo abelii</name>
    <name type="common">Sumatran orangutan</name>
    <name type="synonym">Pongo pygmaeus abelii</name>
    <dbReference type="NCBI Taxonomy" id="9601"/>
    <lineage>
        <taxon>Eukaryota</taxon>
        <taxon>Metazoa</taxon>
        <taxon>Chordata</taxon>
        <taxon>Craniata</taxon>
        <taxon>Vertebrata</taxon>
        <taxon>Euteleostomi</taxon>
        <taxon>Mammalia</taxon>
        <taxon>Eutheria</taxon>
        <taxon>Euarchontoglires</taxon>
        <taxon>Primates</taxon>
        <taxon>Haplorrhini</taxon>
        <taxon>Catarrhini</taxon>
        <taxon>Hominidae</taxon>
        <taxon>Pongo</taxon>
    </lineage>
</organism>
<reference key="1">
    <citation type="submission" date="2004-11" db="EMBL/GenBank/DDBJ databases">
        <authorList>
            <consortium name="The German cDNA consortium"/>
        </authorList>
    </citation>
    <scope>NUCLEOTIDE SEQUENCE [LARGE SCALE MRNA]</scope>
    <source>
        <tissue>Brain cortex</tissue>
    </source>
</reference>
<comment type="function">
    <text evidence="1 2 3">Thiol protease which is believed to participate in intracellular degradation and turnover of proteins (By similarity). Cleaves matrix extracellular phosphoglycoprotein MEPE (By similarity). Involved in the solubilization of cross-linked TG/thyroglobulin in the thyroid follicle lumen (By similarity). Has also been implicated in tumor invasion and metastasis (By similarity).</text>
</comment>
<comment type="catalytic activity">
    <reaction evidence="2">
        <text>Hydrolysis of proteins with broad specificity for peptide bonds. Preferentially cleaves -Arg-Arg-|-Xaa bonds in small molecule substrates (thus differing from cathepsin L). In addition to being an endopeptidase, shows peptidyl-dipeptidase activity, liberating C-terminal dipeptides.</text>
        <dbReference type="EC" id="3.4.22.1"/>
    </reaction>
</comment>
<comment type="subunit">
    <text evidence="2">Dimer of a heavy chain and a light chain cross-linked by a disulfide bond. Interacts with SRPX2. Directly interacts with SHKBP1.</text>
</comment>
<comment type="subcellular location">
    <subcellularLocation>
        <location evidence="3">Lysosome</location>
    </subcellularLocation>
    <subcellularLocation>
        <location evidence="2">Melanosome</location>
    </subcellularLocation>
    <subcellularLocation>
        <location evidence="3">Secreted</location>
        <location evidence="3">Extracellular space</location>
    </subcellularLocation>
    <subcellularLocation>
        <location evidence="3">Apical cell membrane</location>
        <topology evidence="3">Peripheral membrane protein</topology>
        <orientation evidence="3">Extracellular side</orientation>
    </subcellularLocation>
    <text evidence="3">Localizes to the lumen of thyroid follicles and to the apical membrane of thyroid epithelial cells.</text>
</comment>
<comment type="similarity">
    <text evidence="5 6 7">Belongs to the peptidase C1 family.</text>
</comment>